<feature type="chain" id="PRO_1000062803" description="Undecaprenyl-diphosphatase">
    <location>
        <begin position="1"/>
        <end position="249"/>
    </location>
</feature>
<feature type="transmembrane region" description="Helical" evidence="1">
    <location>
        <begin position="11"/>
        <end position="31"/>
    </location>
</feature>
<feature type="transmembrane region" description="Helical" evidence="1">
    <location>
        <begin position="35"/>
        <end position="55"/>
    </location>
</feature>
<feature type="transmembrane region" description="Helical" evidence="1">
    <location>
        <begin position="80"/>
        <end position="100"/>
    </location>
</feature>
<feature type="transmembrane region" description="Helical" evidence="1">
    <location>
        <begin position="101"/>
        <end position="121"/>
    </location>
</feature>
<feature type="transmembrane region" description="Helical" evidence="1">
    <location>
        <begin position="135"/>
        <end position="155"/>
    </location>
</feature>
<feature type="transmembrane region" description="Helical" evidence="1">
    <location>
        <begin position="175"/>
        <end position="195"/>
    </location>
</feature>
<feature type="transmembrane region" description="Helical" evidence="1">
    <location>
        <begin position="202"/>
        <end position="222"/>
    </location>
</feature>
<feature type="transmembrane region" description="Helical" evidence="1">
    <location>
        <begin position="226"/>
        <end position="246"/>
    </location>
</feature>
<reference key="1">
    <citation type="submission" date="2007-03" db="EMBL/GenBank/DDBJ databases">
        <title>Complete sequence of chromosome of Methanococcus maripaludis C5.</title>
        <authorList>
            <consortium name="US DOE Joint Genome Institute"/>
            <person name="Copeland A."/>
            <person name="Lucas S."/>
            <person name="Lapidus A."/>
            <person name="Barry K."/>
            <person name="Glavina del Rio T."/>
            <person name="Dalin E."/>
            <person name="Tice H."/>
            <person name="Pitluck S."/>
            <person name="Chertkov O."/>
            <person name="Brettin T."/>
            <person name="Bruce D."/>
            <person name="Han C."/>
            <person name="Detter J.C."/>
            <person name="Schmutz J."/>
            <person name="Larimer F."/>
            <person name="Land M."/>
            <person name="Hauser L."/>
            <person name="Kyrpides N."/>
            <person name="Mikhailova N."/>
            <person name="Sieprawska-Lupa M."/>
            <person name="Whitman W.B."/>
            <person name="Richardson P."/>
        </authorList>
    </citation>
    <scope>NUCLEOTIDE SEQUENCE [LARGE SCALE GENOMIC DNA]</scope>
    <source>
        <strain>C5 / ATCC BAA-1333</strain>
    </source>
</reference>
<evidence type="ECO:0000255" key="1">
    <source>
        <dbReference type="HAMAP-Rule" id="MF_01006"/>
    </source>
</evidence>
<keyword id="KW-1003">Cell membrane</keyword>
<keyword id="KW-0378">Hydrolase</keyword>
<keyword id="KW-0472">Membrane</keyword>
<keyword id="KW-0812">Transmembrane</keyword>
<keyword id="KW-1133">Transmembrane helix</keyword>
<sequence length="249" mass="27211">MEELILGIVQGLTEFLPISSSGHLAIFTAIFNSTPDVGYFAFLHLATFLAVLIFVKSEVFEIVNGISKKDNEYINLASKLVLSTIPAVIVGLCFGDFIESVFSSTFLIGVFLSITGILMLLSDKLNQNLKTIKSIPYLDAMIVGIFQAFSVLPGISRSGTTLFAALFLGMKKEDAVKYSFLMGLPVTFGAGILELQKVSFSAEQLFGFVISFLTGLLGLYLVKKMVIGGKLKIFGYYCFLASFFVLMFL</sequence>
<accession>A4FX27</accession>
<comment type="function">
    <text evidence="1">Catalyzes the dephosphorylation of undecaprenyl diphosphate (UPP).</text>
</comment>
<comment type="catalytic activity">
    <reaction evidence="1">
        <text>di-trans,octa-cis-undecaprenyl diphosphate + H2O = di-trans,octa-cis-undecaprenyl phosphate + phosphate + H(+)</text>
        <dbReference type="Rhea" id="RHEA:28094"/>
        <dbReference type="ChEBI" id="CHEBI:15377"/>
        <dbReference type="ChEBI" id="CHEBI:15378"/>
        <dbReference type="ChEBI" id="CHEBI:43474"/>
        <dbReference type="ChEBI" id="CHEBI:58405"/>
        <dbReference type="ChEBI" id="CHEBI:60392"/>
        <dbReference type="EC" id="3.6.1.27"/>
    </reaction>
</comment>
<comment type="subcellular location">
    <subcellularLocation>
        <location evidence="1">Cell membrane</location>
        <topology evidence="1">Multi-pass membrane protein</topology>
    </subcellularLocation>
</comment>
<comment type="similarity">
    <text evidence="1">Belongs to the UppP family.</text>
</comment>
<name>UPPP_METM5</name>
<protein>
    <recommendedName>
        <fullName evidence="1">Undecaprenyl-diphosphatase</fullName>
        <ecNumber evidence="1">3.6.1.27</ecNumber>
    </recommendedName>
    <alternativeName>
        <fullName evidence="1">Undecaprenyl pyrophosphate phosphatase</fullName>
    </alternativeName>
</protein>
<gene>
    <name evidence="1" type="primary">uppP</name>
    <name type="ordered locus">MmarC5_0441</name>
</gene>
<organism>
    <name type="scientific">Methanococcus maripaludis (strain C5 / ATCC BAA-1333)</name>
    <dbReference type="NCBI Taxonomy" id="402880"/>
    <lineage>
        <taxon>Archaea</taxon>
        <taxon>Methanobacteriati</taxon>
        <taxon>Methanobacteriota</taxon>
        <taxon>Methanomada group</taxon>
        <taxon>Methanococci</taxon>
        <taxon>Methanococcales</taxon>
        <taxon>Methanococcaceae</taxon>
        <taxon>Methanococcus</taxon>
    </lineage>
</organism>
<dbReference type="EC" id="3.6.1.27" evidence="1"/>
<dbReference type="EMBL" id="CP000609">
    <property type="protein sequence ID" value="ABO34756.1"/>
    <property type="molecule type" value="Genomic_DNA"/>
</dbReference>
<dbReference type="RefSeq" id="WP_011868211.1">
    <property type="nucleotide sequence ID" value="NC_009135.1"/>
</dbReference>
<dbReference type="SMR" id="A4FX27"/>
<dbReference type="STRING" id="402880.MmarC5_0441"/>
<dbReference type="GeneID" id="4928191"/>
<dbReference type="KEGG" id="mmq:MmarC5_0441"/>
<dbReference type="eggNOG" id="arCOG04761">
    <property type="taxonomic scope" value="Archaea"/>
</dbReference>
<dbReference type="HOGENOM" id="CLU_060296_1_2_2"/>
<dbReference type="OrthoDB" id="65864at2157"/>
<dbReference type="Proteomes" id="UP000000253">
    <property type="component" value="Chromosome"/>
</dbReference>
<dbReference type="GO" id="GO:0005886">
    <property type="term" value="C:plasma membrane"/>
    <property type="evidence" value="ECO:0007669"/>
    <property type="project" value="UniProtKB-SubCell"/>
</dbReference>
<dbReference type="GO" id="GO:0050380">
    <property type="term" value="F:undecaprenyl-diphosphatase activity"/>
    <property type="evidence" value="ECO:0007669"/>
    <property type="project" value="UniProtKB-UniRule"/>
</dbReference>
<dbReference type="HAMAP" id="MF_01006">
    <property type="entry name" value="Undec_diphosphatase"/>
    <property type="match status" value="1"/>
</dbReference>
<dbReference type="InterPro" id="IPR003824">
    <property type="entry name" value="UppP"/>
</dbReference>
<dbReference type="PANTHER" id="PTHR30622">
    <property type="entry name" value="UNDECAPRENYL-DIPHOSPHATASE"/>
    <property type="match status" value="1"/>
</dbReference>
<dbReference type="PANTHER" id="PTHR30622:SF4">
    <property type="entry name" value="UNDECAPRENYL-DIPHOSPHATASE"/>
    <property type="match status" value="1"/>
</dbReference>
<dbReference type="Pfam" id="PF02673">
    <property type="entry name" value="BacA"/>
    <property type="match status" value="1"/>
</dbReference>
<proteinExistence type="inferred from homology"/>